<proteinExistence type="evidence at transcript level"/>
<organism>
    <name type="scientific">Halobacterium salinarum (strain ATCC 700922 / JCM 11081 / NRC-1)</name>
    <name type="common">Halobacterium halobium</name>
    <dbReference type="NCBI Taxonomy" id="64091"/>
    <lineage>
        <taxon>Archaea</taxon>
        <taxon>Methanobacteriati</taxon>
        <taxon>Methanobacteriota</taxon>
        <taxon>Stenosarchaea group</taxon>
        <taxon>Halobacteria</taxon>
        <taxon>Halobacteriales</taxon>
        <taxon>Halobacteriaceae</taxon>
        <taxon>Halobacterium</taxon>
        <taxon>Halobacterium salinarum NRC-34001</taxon>
    </lineage>
</organism>
<keyword id="KW-0067">ATP-binding</keyword>
<keyword id="KW-0963">Cytoplasm</keyword>
<keyword id="KW-0418">Kinase</keyword>
<keyword id="KW-0479">Metal-binding</keyword>
<keyword id="KW-0545">Nucleotide biosynthesis</keyword>
<keyword id="KW-0547">Nucleotide-binding</keyword>
<keyword id="KW-1185">Reference proteome</keyword>
<keyword id="KW-0808">Transferase</keyword>
<keyword id="KW-0862">Zinc</keyword>
<protein>
    <recommendedName>
        <fullName evidence="1">Adenylate kinase</fullName>
        <shortName evidence="1">AK</shortName>
        <ecNumber evidence="1">2.7.4.3</ecNumber>
    </recommendedName>
    <alternativeName>
        <fullName evidence="1">ATP-AMP transphosphorylase</fullName>
    </alternativeName>
    <alternativeName>
        <fullName evidence="1">ATP:AMP phosphotransferase</fullName>
    </alternativeName>
    <alternativeName>
        <fullName evidence="1">Adenylate monophosphate kinase</fullName>
    </alternativeName>
</protein>
<dbReference type="EC" id="2.7.4.3" evidence="1"/>
<dbReference type="EMBL" id="D78200">
    <property type="status" value="NOT_ANNOTATED_CDS"/>
    <property type="molecule type" value="mRNA"/>
</dbReference>
<dbReference type="EMBL" id="AE004437">
    <property type="protein sequence ID" value="AAG19963.1"/>
    <property type="molecule type" value="Genomic_DNA"/>
</dbReference>
<dbReference type="PIR" id="G84324">
    <property type="entry name" value="G84324"/>
</dbReference>
<dbReference type="PIR" id="JC5039">
    <property type="entry name" value="JC5039"/>
</dbReference>
<dbReference type="RefSeq" id="WP_010903261.1">
    <property type="nucleotide sequence ID" value="NC_002607.1"/>
</dbReference>
<dbReference type="SMR" id="Q9HPA7"/>
<dbReference type="STRING" id="64091.VNG_1724G"/>
<dbReference type="PaxDb" id="64091-VNG_1724G"/>
<dbReference type="KEGG" id="hal:VNG_1724G"/>
<dbReference type="PATRIC" id="fig|64091.14.peg.1316"/>
<dbReference type="HOGENOM" id="CLU_032354_1_2_2"/>
<dbReference type="InParanoid" id="Q9HPA7"/>
<dbReference type="OrthoDB" id="31230at2157"/>
<dbReference type="PhylomeDB" id="Q9HPA7"/>
<dbReference type="UniPathway" id="UPA00588">
    <property type="reaction ID" value="UER00649"/>
</dbReference>
<dbReference type="Proteomes" id="UP000000554">
    <property type="component" value="Chromosome"/>
</dbReference>
<dbReference type="GO" id="GO:0005737">
    <property type="term" value="C:cytoplasm"/>
    <property type="evidence" value="ECO:0000318"/>
    <property type="project" value="GO_Central"/>
</dbReference>
<dbReference type="GO" id="GO:0004017">
    <property type="term" value="F:adenylate kinase activity"/>
    <property type="evidence" value="ECO:0000318"/>
    <property type="project" value="GO_Central"/>
</dbReference>
<dbReference type="GO" id="GO:0005524">
    <property type="term" value="F:ATP binding"/>
    <property type="evidence" value="ECO:0007669"/>
    <property type="project" value="UniProtKB-UniRule"/>
</dbReference>
<dbReference type="GO" id="GO:0008270">
    <property type="term" value="F:zinc ion binding"/>
    <property type="evidence" value="ECO:0007669"/>
    <property type="project" value="UniProtKB-UniRule"/>
</dbReference>
<dbReference type="GO" id="GO:0044209">
    <property type="term" value="P:AMP salvage"/>
    <property type="evidence" value="ECO:0007669"/>
    <property type="project" value="UniProtKB-UniRule"/>
</dbReference>
<dbReference type="CDD" id="cd01428">
    <property type="entry name" value="ADK"/>
    <property type="match status" value="1"/>
</dbReference>
<dbReference type="FunFam" id="3.40.50.300:FF:000106">
    <property type="entry name" value="Adenylate kinase mitochondrial"/>
    <property type="match status" value="1"/>
</dbReference>
<dbReference type="Gene3D" id="3.40.50.300">
    <property type="entry name" value="P-loop containing nucleotide triphosphate hydrolases"/>
    <property type="match status" value="1"/>
</dbReference>
<dbReference type="HAMAP" id="MF_00235">
    <property type="entry name" value="Adenylate_kinase_Adk"/>
    <property type="match status" value="1"/>
</dbReference>
<dbReference type="InterPro" id="IPR006259">
    <property type="entry name" value="Adenyl_kin_sub"/>
</dbReference>
<dbReference type="InterPro" id="IPR000850">
    <property type="entry name" value="Adenylat/UMP-CMP_kin"/>
</dbReference>
<dbReference type="InterPro" id="IPR033690">
    <property type="entry name" value="Adenylat_kinase_CS"/>
</dbReference>
<dbReference type="InterPro" id="IPR007862">
    <property type="entry name" value="Adenylate_kinase_lid-dom"/>
</dbReference>
<dbReference type="InterPro" id="IPR036193">
    <property type="entry name" value="ADK_active_lid_dom_sf"/>
</dbReference>
<dbReference type="InterPro" id="IPR027417">
    <property type="entry name" value="P-loop_NTPase"/>
</dbReference>
<dbReference type="NCBIfam" id="TIGR01351">
    <property type="entry name" value="adk"/>
    <property type="match status" value="1"/>
</dbReference>
<dbReference type="NCBIfam" id="NF011103">
    <property type="entry name" value="PRK14530.1"/>
    <property type="match status" value="1"/>
</dbReference>
<dbReference type="PANTHER" id="PTHR23359">
    <property type="entry name" value="NUCLEOTIDE KINASE"/>
    <property type="match status" value="1"/>
</dbReference>
<dbReference type="Pfam" id="PF00406">
    <property type="entry name" value="ADK"/>
    <property type="match status" value="1"/>
</dbReference>
<dbReference type="Pfam" id="PF05191">
    <property type="entry name" value="ADK_lid"/>
    <property type="match status" value="1"/>
</dbReference>
<dbReference type="PRINTS" id="PR00094">
    <property type="entry name" value="ADENYLTKNASE"/>
</dbReference>
<dbReference type="SUPFAM" id="SSF57774">
    <property type="entry name" value="Microbial and mitochondrial ADK, insert 'zinc finger' domain"/>
    <property type="match status" value="1"/>
</dbReference>
<dbReference type="SUPFAM" id="SSF52540">
    <property type="entry name" value="P-loop containing nucleoside triphosphate hydrolases"/>
    <property type="match status" value="1"/>
</dbReference>
<dbReference type="PROSITE" id="PS00113">
    <property type="entry name" value="ADENYLATE_KINASE"/>
    <property type="match status" value="1"/>
</dbReference>
<reference key="1">
    <citation type="journal article" date="1996" name="Gene">
        <title>Cloning and characterization of the gene encoding Halobacterium halobium adenylate kinase.</title>
        <authorList>
            <person name="Song S."/>
            <person name="Inouye S."/>
            <person name="Kawai M."/>
            <person name="Fukami-Kobayashi K."/>
            <person name="Go M."/>
            <person name="Nakazawa A."/>
        </authorList>
    </citation>
    <scope>NUCLEOTIDE SEQUENCE [GENOMIC DNA]</scope>
    <source>
        <strain>R1 / S9 / L33</strain>
    </source>
</reference>
<reference key="2">
    <citation type="journal article" date="2000" name="Proc. Natl. Acad. Sci. U.S.A.">
        <title>Genome sequence of Halobacterium species NRC-1.</title>
        <authorList>
            <person name="Ng W.V."/>
            <person name="Kennedy S.P."/>
            <person name="Mahairas G.G."/>
            <person name="Berquist B."/>
            <person name="Pan M."/>
            <person name="Shukla H.D."/>
            <person name="Lasky S.R."/>
            <person name="Baliga N.S."/>
            <person name="Thorsson V."/>
            <person name="Sbrogna J."/>
            <person name="Swartzell S."/>
            <person name="Weir D."/>
            <person name="Hall J."/>
            <person name="Dahl T.A."/>
            <person name="Welti R."/>
            <person name="Goo Y.A."/>
            <person name="Leithauser B."/>
            <person name="Keller K."/>
            <person name="Cruz R."/>
            <person name="Danson M.J."/>
            <person name="Hough D.W."/>
            <person name="Maddocks D.G."/>
            <person name="Jablonski P.E."/>
            <person name="Krebs M.P."/>
            <person name="Angevine C.M."/>
            <person name="Dale H."/>
            <person name="Isenbarger T.A."/>
            <person name="Peck R.F."/>
            <person name="Pohlschroder M."/>
            <person name="Spudich J.L."/>
            <person name="Jung K.-H."/>
            <person name="Alam M."/>
            <person name="Freitas T."/>
            <person name="Hou S."/>
            <person name="Daniels C.J."/>
            <person name="Dennis P.P."/>
            <person name="Omer A.D."/>
            <person name="Ebhardt H."/>
            <person name="Lowe T.M."/>
            <person name="Liang P."/>
            <person name="Riley M."/>
            <person name="Hood L."/>
            <person name="DasSarma S."/>
        </authorList>
    </citation>
    <scope>NUCLEOTIDE SEQUENCE [LARGE SCALE GENOMIC DNA]</scope>
    <source>
        <strain>ATCC 700922 / JCM 11081 / NRC-1</strain>
    </source>
</reference>
<evidence type="ECO:0000255" key="1">
    <source>
        <dbReference type="HAMAP-Rule" id="MF_00235"/>
    </source>
</evidence>
<evidence type="ECO:0000305" key="2"/>
<feature type="chain" id="PRO_0000158898" description="Adenylate kinase">
    <location>
        <begin position="1"/>
        <end position="216"/>
    </location>
</feature>
<feature type="region of interest" description="NMP" evidence="1">
    <location>
        <begin position="33"/>
        <end position="66"/>
    </location>
</feature>
<feature type="region of interest" description="LID" evidence="1">
    <location>
        <begin position="125"/>
        <end position="162"/>
    </location>
</feature>
<feature type="binding site" evidence="1">
    <location>
        <begin position="13"/>
        <end position="18"/>
    </location>
    <ligand>
        <name>ATP</name>
        <dbReference type="ChEBI" id="CHEBI:30616"/>
    </ligand>
</feature>
<feature type="binding site" evidence="1">
    <location>
        <position position="34"/>
    </location>
    <ligand>
        <name>AMP</name>
        <dbReference type="ChEBI" id="CHEBI:456215"/>
    </ligand>
</feature>
<feature type="binding site" evidence="1">
    <location>
        <position position="39"/>
    </location>
    <ligand>
        <name>AMP</name>
        <dbReference type="ChEBI" id="CHEBI:456215"/>
    </ligand>
</feature>
<feature type="binding site" evidence="1">
    <location>
        <begin position="64"/>
        <end position="66"/>
    </location>
    <ligand>
        <name>AMP</name>
        <dbReference type="ChEBI" id="CHEBI:456215"/>
    </ligand>
</feature>
<feature type="binding site" evidence="1">
    <location>
        <begin position="89"/>
        <end position="92"/>
    </location>
    <ligand>
        <name>AMP</name>
        <dbReference type="ChEBI" id="CHEBI:456215"/>
    </ligand>
</feature>
<feature type="binding site" evidence="1">
    <location>
        <position position="96"/>
    </location>
    <ligand>
        <name>AMP</name>
        <dbReference type="ChEBI" id="CHEBI:456215"/>
    </ligand>
</feature>
<feature type="binding site" evidence="1">
    <location>
        <position position="126"/>
    </location>
    <ligand>
        <name>ATP</name>
        <dbReference type="ChEBI" id="CHEBI:30616"/>
    </ligand>
</feature>
<feature type="binding site" evidence="1">
    <location>
        <position position="129"/>
    </location>
    <ligand>
        <name>Zn(2+)</name>
        <dbReference type="ChEBI" id="CHEBI:29105"/>
        <note>structural</note>
    </ligand>
</feature>
<feature type="binding site" evidence="1">
    <location>
        <position position="132"/>
    </location>
    <ligand>
        <name>Zn(2+)</name>
        <dbReference type="ChEBI" id="CHEBI:29105"/>
        <note>structural</note>
    </ligand>
</feature>
<feature type="binding site" evidence="1">
    <location>
        <begin position="135"/>
        <end position="136"/>
    </location>
    <ligand>
        <name>ATP</name>
        <dbReference type="ChEBI" id="CHEBI:30616"/>
    </ligand>
</feature>
<feature type="binding site" evidence="1">
    <location>
        <position position="149"/>
    </location>
    <ligand>
        <name>Zn(2+)</name>
        <dbReference type="ChEBI" id="CHEBI:29105"/>
        <note>structural</note>
    </ligand>
</feature>
<feature type="binding site" evidence="1">
    <location>
        <position position="152"/>
    </location>
    <ligand>
        <name>Zn(2+)</name>
        <dbReference type="ChEBI" id="CHEBI:29105"/>
        <note>structural</note>
    </ligand>
</feature>
<feature type="binding site" evidence="1">
    <location>
        <position position="159"/>
    </location>
    <ligand>
        <name>AMP</name>
        <dbReference type="ChEBI" id="CHEBI:456215"/>
    </ligand>
</feature>
<feature type="binding site" evidence="1">
    <location>
        <position position="170"/>
    </location>
    <ligand>
        <name>AMP</name>
        <dbReference type="ChEBI" id="CHEBI:456215"/>
    </ligand>
</feature>
<feature type="binding site" evidence="1">
    <location>
        <position position="198"/>
    </location>
    <ligand>
        <name>ATP</name>
        <dbReference type="ChEBI" id="CHEBI:30616"/>
    </ligand>
</feature>
<feature type="sequence conflict" description="In Ref. 1; D78200." evidence="2" ref="1">
    <original>E</original>
    <variation>L</variation>
    <location>
        <position position="164"/>
    </location>
</feature>
<sequence>MSHPNVLLLGAPGAGKGTQSRRLVDEFGVEHVTTGDALRANKTKDITHLDVEYDTPGAYMDAGELVPDAVVNEIVKTALDDADGYVLDGYPRNESQTEYLDSITDLDVVLYLDVDEDELVGRLTGRRVCEDCGATFHVSFNQPETEGVCDACGGSLYQREDDTEETARERITVYEENTAPVVEYFREQGVLAEVDGERTPDEVWTDVAAAVDERTA</sequence>
<accession>Q9HPA7</accession>
<accession>Q7M542</accession>
<name>KAD_HALSA</name>
<gene>
    <name evidence="1" type="primary">adk</name>
    <name type="synonym">ak</name>
    <name type="ordered locus">VNG_1724G</name>
</gene>
<comment type="function">
    <text evidence="1">Catalyzes the reversible transfer of the terminal phosphate group between ATP and AMP. Plays an important role in cellular energy homeostasis and in adenine nucleotide metabolism.</text>
</comment>
<comment type="catalytic activity">
    <reaction evidence="1">
        <text>AMP + ATP = 2 ADP</text>
        <dbReference type="Rhea" id="RHEA:12973"/>
        <dbReference type="ChEBI" id="CHEBI:30616"/>
        <dbReference type="ChEBI" id="CHEBI:456215"/>
        <dbReference type="ChEBI" id="CHEBI:456216"/>
        <dbReference type="EC" id="2.7.4.3"/>
    </reaction>
</comment>
<comment type="pathway">
    <text evidence="1">Purine metabolism; AMP biosynthesis via salvage pathway; AMP from ADP: step 1/1.</text>
</comment>
<comment type="subunit">
    <text evidence="1">Monomer.</text>
</comment>
<comment type="subcellular location">
    <subcellularLocation>
        <location>Cytoplasm</location>
    </subcellularLocation>
</comment>
<comment type="domain">
    <text evidence="1">Consists of three domains, a large central CORE domain and two small peripheral domains, NMPbind and LID, which undergo movements during catalysis. The LID domain closes over the site of phosphoryl transfer upon ATP binding. Assembling and dissambling the active center during each catalytic cycle provides an effective means to prevent ATP hydrolysis. Some bacteria have evolved a zinc-coordinating structure that stabilizes the LID domain.</text>
</comment>
<comment type="similarity">
    <text evidence="1">Belongs to the adenylate kinase family.</text>
</comment>